<comment type="function">
    <text evidence="3 4">May act as a scaffolding protein within caveolar membranes. Forms a stable heterooligomeric complex with CAV2 that targets to lipid rafts and drives caveolae formation. Mediates the recruitment of CAVIN proteins (CAVIN1/2/3/4) to the caveolae (By similarity). Interacts directly with G-protein alpha subunits and can functionally regulate their activity (By similarity). Involved in the costimulatory signal essential for T-cell receptor (TCR)-mediated T-cell activation. Its binding to DPP4 induces T-cell proliferation and NF-kappa-B activation in a T-cell receptor/CD3-dependent manner (By similarity). Recruits CTNNB1 to caveolar membranes and may regulate CTNNB1-mediated signaling through the Wnt pathway (By similarity). Negatively regulates TGFB1-mediated activation of SMAD2/3 by mediating the internalization of TGFBR1 from membrane rafts leading to its subsequent degradation (By similarity). Binds 20(S)-hydroxycholesterol (20(S)-OHC) (By similarity).</text>
</comment>
<comment type="subunit">
    <text evidence="2 3 4 5">Homooligomer. Interacts with GLIPR2. Interacts with NOSTRIN (By similarity). Interacts with SNAP25 and STX1A (By similarity). Interacts (via the N-terminus) with DPP4; the interaction is direct (By similarity). Interacts with CTNNB1, CDH1 and JUP. Interacts with PACSIN2; this interaction induces membrane tubulation (By similarity). Interacts with SLC7A9 (By similarity). Interacts with BMX and BTK. Interacts with TGFBR1. Interacts with CAVIN3 (via leucine-zipper domain) in a cholesterol-sensitive manner. Interacts with CAVIN1. Interacts with EHD2 in a cholesterol-dependent manner. Forms a ternary complex with UBXN6 and VCP; mediates CAV1 targeting to lysosomes for degradation. Interacts with ABCG1; this interaction regulates ABCG1-mediated cholesterol efflux (By similarity). Interacts with NEU3; this interaction enhances NEU3 sialidase activity within caveola. Interacts (via C-terminus) with SPRY1, SPRY2 (via C-terminus), SPRY3, and SPRY4 (By similarity). Interacts with IGFBP5; this interaction allows trafficking of IGFBP5 from the plasma membrane to the nucleus (By similarity).</text>
</comment>
<comment type="subcellular location">
    <subcellularLocation>
        <location evidence="1">Golgi apparatus membrane</location>
        <topology evidence="1">Peripheral membrane protein</topology>
    </subcellularLocation>
    <subcellularLocation>
        <location evidence="1">Cell membrane</location>
        <topology evidence="1">Peripheral membrane protein</topology>
    </subcellularLocation>
    <subcellularLocation>
        <location evidence="3">Membrane</location>
        <location evidence="3">Caveola</location>
        <topology evidence="1">Peripheral membrane protein</topology>
    </subcellularLocation>
    <subcellularLocation>
        <location evidence="4">Membrane raft</location>
    </subcellularLocation>
    <text evidence="1">Colocalized with DPP4 in membrane rafts. Potential hairpin-like structure in the membrane. Membrane protein of caveolae (By similarity).</text>
</comment>
<comment type="PTM">
    <text evidence="4">Phosphorylated at Tyr-14 by ABL1 in response to oxidative stress.</text>
</comment>
<comment type="PTM">
    <text evidence="4">Ubiquitinated. Undergo monoubiquitination and multi- and/or polyubiquitination. Monoubiquitination of N-terminal lysines promotes integration in a ternary complex with UBXN6 and VCP which promotes oligomeric CAV1 targeting to lysosomes for degradation. Ubiquitinated by ZNRF1; leading to degradation and modulation of the TLR4-mediated immune response.</text>
</comment>
<comment type="similarity">
    <text evidence="7">Belongs to the caveolin family.</text>
</comment>
<feature type="initiator methionine" description="Removed" evidence="4">
    <location>
        <position position="1"/>
    </location>
</feature>
<feature type="chain" id="PRO_0000226332" description="Caveolin-1">
    <location>
        <begin position="2"/>
        <end position="178"/>
    </location>
</feature>
<feature type="topological domain" description="Cytoplasmic" evidence="6">
    <location>
        <begin position="2"/>
        <end position="104"/>
    </location>
</feature>
<feature type="intramembrane region" description="Helical" evidence="6">
    <location>
        <begin position="105"/>
        <end position="125"/>
    </location>
</feature>
<feature type="topological domain" description="Cytoplasmic" evidence="6">
    <location>
        <begin position="126"/>
        <end position="178"/>
    </location>
</feature>
<feature type="region of interest" description="Required for homooligomerization" evidence="4">
    <location>
        <begin position="2"/>
        <end position="94"/>
    </location>
</feature>
<feature type="region of interest" description="Interaction with CAVIN3" evidence="4">
    <location>
        <begin position="82"/>
        <end position="94"/>
    </location>
</feature>
<feature type="region of interest" description="Interacts with SPRY1, SPRY2, SPRY3 and SPRY4" evidence="3">
    <location>
        <begin position="131"/>
        <end position="142"/>
    </location>
</feature>
<feature type="region of interest" description="Interacts with SPRY1, SPRY2, and SPRY4" evidence="3">
    <location>
        <begin position="149"/>
        <end position="160"/>
    </location>
</feature>
<feature type="region of interest" description="Interacts with SPRY1, SPRY2, SPRY3 and SPRY4" evidence="3">
    <location>
        <begin position="167"/>
        <end position="178"/>
    </location>
</feature>
<feature type="modified residue" description="N-acetylserine" evidence="4">
    <location>
        <position position="2"/>
    </location>
</feature>
<feature type="modified residue" description="Phosphoserine" evidence="2">
    <location>
        <position position="2"/>
    </location>
</feature>
<feature type="modified residue" description="N6-acetyllysine; alternate" evidence="4">
    <location>
        <position position="5"/>
    </location>
</feature>
<feature type="modified residue" description="Phosphotyrosine" evidence="4">
    <location>
        <position position="6"/>
    </location>
</feature>
<feature type="modified residue" description="Phosphoserine" evidence="3">
    <location>
        <position position="9"/>
    </location>
</feature>
<feature type="modified residue" description="Phosphotyrosine; by ABL1" evidence="3">
    <location>
        <position position="14"/>
    </location>
</feature>
<feature type="modified residue" description="Phosphotyrosine" evidence="4">
    <location>
        <position position="25"/>
    </location>
</feature>
<feature type="lipid moiety-binding region" description="S-palmitoyl cysteine" evidence="1">
    <location>
        <position position="133"/>
    </location>
</feature>
<feature type="lipid moiety-binding region" description="S-palmitoyl cysteine" evidence="1">
    <location>
        <position position="143"/>
    </location>
</feature>
<feature type="lipid moiety-binding region" description="S-palmitoyl cysteine" evidence="1">
    <location>
        <position position="156"/>
    </location>
</feature>
<feature type="cross-link" description="Glycyl lysine isopeptide (Lys-Gly) (interchain with G-Cter in ubiquitin); alternate" evidence="4">
    <location>
        <position position="5"/>
    </location>
</feature>
<feature type="cross-link" description="Glycyl lysine isopeptide (Lys-Gly) (interchain with G-Cter in ubiquitin)" evidence="4">
    <location>
        <position position="26"/>
    </location>
</feature>
<feature type="cross-link" description="Glycyl lysine isopeptide (Lys-Gly) (interchain with G-Cter in ubiquitin)" evidence="4">
    <location>
        <position position="30"/>
    </location>
</feature>
<feature type="cross-link" description="Glycyl lysine isopeptide (Lys-Gly) (interchain with G-Cter in ubiquitin)" evidence="4">
    <location>
        <position position="39"/>
    </location>
</feature>
<feature type="cross-link" description="Glycyl lysine isopeptide (Lys-Gly) (interchain with G-Cter in ubiquitin)" evidence="4">
    <location>
        <position position="47"/>
    </location>
</feature>
<feature type="cross-link" description="Glycyl lysine isopeptide (Lys-Gly) (interchain with G-Cter in ubiquitin)" evidence="4">
    <location>
        <position position="57"/>
    </location>
</feature>
<organism>
    <name type="scientific">Equus caballus</name>
    <name type="common">Horse</name>
    <dbReference type="NCBI Taxonomy" id="9796"/>
    <lineage>
        <taxon>Eukaryota</taxon>
        <taxon>Metazoa</taxon>
        <taxon>Chordata</taxon>
        <taxon>Craniata</taxon>
        <taxon>Vertebrata</taxon>
        <taxon>Euteleostomi</taxon>
        <taxon>Mammalia</taxon>
        <taxon>Eutheria</taxon>
        <taxon>Laurasiatheria</taxon>
        <taxon>Perissodactyla</taxon>
        <taxon>Equidae</taxon>
        <taxon>Equus</taxon>
    </lineage>
</organism>
<evidence type="ECO:0000250" key="1"/>
<evidence type="ECO:0000250" key="2">
    <source>
        <dbReference type="UniProtKB" id="P41350"/>
    </source>
</evidence>
<evidence type="ECO:0000250" key="3">
    <source>
        <dbReference type="UniProtKB" id="P49817"/>
    </source>
</evidence>
<evidence type="ECO:0000250" key="4">
    <source>
        <dbReference type="UniProtKB" id="Q03135"/>
    </source>
</evidence>
<evidence type="ECO:0000250" key="5">
    <source>
        <dbReference type="UniProtKB" id="Q2IBA5"/>
    </source>
</evidence>
<evidence type="ECO:0000255" key="6"/>
<evidence type="ECO:0000305" key="7"/>
<dbReference type="EMBL" id="DP000020">
    <property type="protein sequence ID" value="ABB89799.1"/>
    <property type="molecule type" value="Genomic_DNA"/>
</dbReference>
<dbReference type="RefSeq" id="NP_001107615.1">
    <property type="nucleotide sequence ID" value="NM_001114143.1"/>
</dbReference>
<dbReference type="SMR" id="Q2QLB0"/>
<dbReference type="FunCoup" id="Q2QLB0">
    <property type="interactions" value="664"/>
</dbReference>
<dbReference type="STRING" id="9796.ENSECAP00000040612"/>
<dbReference type="iPTMnet" id="Q2QLB0"/>
<dbReference type="PaxDb" id="9796-ENSECAP00000040612"/>
<dbReference type="PeptideAtlas" id="Q2QLB0"/>
<dbReference type="GeneID" id="100055975"/>
<dbReference type="KEGG" id="ecb:100055975"/>
<dbReference type="CTD" id="857"/>
<dbReference type="HOGENOM" id="CLU_102582_0_0_1"/>
<dbReference type="InParanoid" id="Q2QLB0"/>
<dbReference type="OMA" id="MSGSKYV"/>
<dbReference type="OrthoDB" id="5917823at2759"/>
<dbReference type="TreeFam" id="TF315736"/>
<dbReference type="Proteomes" id="UP000002281">
    <property type="component" value="Chromosome 4"/>
</dbReference>
<dbReference type="Bgee" id="ENSECAG00000009134">
    <property type="expression patterns" value="Expressed in articular cartilage of joint and 19 other cell types or tissues"/>
</dbReference>
<dbReference type="ExpressionAtlas" id="Q2QLB0">
    <property type="expression patterns" value="baseline"/>
</dbReference>
<dbReference type="GO" id="GO:0005901">
    <property type="term" value="C:caveola"/>
    <property type="evidence" value="ECO:0000250"/>
    <property type="project" value="UniProtKB"/>
</dbReference>
<dbReference type="GO" id="GO:0031410">
    <property type="term" value="C:cytoplasmic vesicle"/>
    <property type="evidence" value="ECO:0000318"/>
    <property type="project" value="GO_Central"/>
</dbReference>
<dbReference type="GO" id="GO:0005768">
    <property type="term" value="C:endosome"/>
    <property type="evidence" value="ECO:0000250"/>
    <property type="project" value="UniProtKB"/>
</dbReference>
<dbReference type="GO" id="GO:0005794">
    <property type="term" value="C:Golgi apparatus"/>
    <property type="evidence" value="ECO:0000318"/>
    <property type="project" value="GO_Central"/>
</dbReference>
<dbReference type="GO" id="GO:0000139">
    <property type="term" value="C:Golgi membrane"/>
    <property type="evidence" value="ECO:0007669"/>
    <property type="project" value="UniProtKB-SubCell"/>
</dbReference>
<dbReference type="GO" id="GO:0045121">
    <property type="term" value="C:membrane raft"/>
    <property type="evidence" value="ECO:0000250"/>
    <property type="project" value="UniProtKB"/>
</dbReference>
<dbReference type="GO" id="GO:0048471">
    <property type="term" value="C:perinuclear region of cytoplasm"/>
    <property type="evidence" value="ECO:0000318"/>
    <property type="project" value="GO_Central"/>
</dbReference>
<dbReference type="GO" id="GO:0060090">
    <property type="term" value="F:molecular adaptor activity"/>
    <property type="evidence" value="ECO:0000318"/>
    <property type="project" value="GO_Central"/>
</dbReference>
<dbReference type="GO" id="GO:0008142">
    <property type="term" value="F:oxysterol binding"/>
    <property type="evidence" value="ECO:0000250"/>
    <property type="project" value="UniProtKB"/>
</dbReference>
<dbReference type="GO" id="GO:0019901">
    <property type="term" value="F:protein kinase binding"/>
    <property type="evidence" value="ECO:0000318"/>
    <property type="project" value="GO_Central"/>
</dbReference>
<dbReference type="GO" id="GO:0044325">
    <property type="term" value="F:transmembrane transporter binding"/>
    <property type="evidence" value="ECO:0000318"/>
    <property type="project" value="GO_Central"/>
</dbReference>
<dbReference type="GO" id="GO:0070836">
    <property type="term" value="P:caveola assembly"/>
    <property type="evidence" value="ECO:0000318"/>
    <property type="project" value="GO_Central"/>
</dbReference>
<dbReference type="GO" id="GO:0030154">
    <property type="term" value="P:cell differentiation"/>
    <property type="evidence" value="ECO:0000318"/>
    <property type="project" value="GO_Central"/>
</dbReference>
<dbReference type="GO" id="GO:0001937">
    <property type="term" value="P:negative regulation of endothelial cell proliferation"/>
    <property type="evidence" value="ECO:0000318"/>
    <property type="project" value="GO_Central"/>
</dbReference>
<dbReference type="GO" id="GO:0031623">
    <property type="term" value="P:receptor internalization"/>
    <property type="evidence" value="ECO:0000250"/>
    <property type="project" value="UniProtKB"/>
</dbReference>
<dbReference type="GO" id="GO:0051480">
    <property type="term" value="P:regulation of cytosolic calcium ion concentration"/>
    <property type="evidence" value="ECO:0000318"/>
    <property type="project" value="GO_Central"/>
</dbReference>
<dbReference type="GO" id="GO:0031295">
    <property type="term" value="P:T cell costimulation"/>
    <property type="evidence" value="ECO:0000250"/>
    <property type="project" value="UniProtKB"/>
</dbReference>
<dbReference type="InterPro" id="IPR001612">
    <property type="entry name" value="Caveolin"/>
</dbReference>
<dbReference type="InterPro" id="IPR018361">
    <property type="entry name" value="Caveolin_CS"/>
</dbReference>
<dbReference type="PANTHER" id="PTHR10844">
    <property type="entry name" value="CAVEOLIN"/>
    <property type="match status" value="1"/>
</dbReference>
<dbReference type="PANTHER" id="PTHR10844:SF18">
    <property type="entry name" value="CAVEOLIN-1"/>
    <property type="match status" value="1"/>
</dbReference>
<dbReference type="Pfam" id="PF01146">
    <property type="entry name" value="Caveolin"/>
    <property type="match status" value="1"/>
</dbReference>
<dbReference type="PROSITE" id="PS01210">
    <property type="entry name" value="CAVEOLIN"/>
    <property type="match status" value="1"/>
</dbReference>
<name>CAV1_HORSE</name>
<reference key="1">
    <citation type="submission" date="2005-11" db="EMBL/GenBank/DDBJ databases">
        <title>NISC comparative sequencing initiative.</title>
        <authorList>
            <person name="Antonellis A."/>
            <person name="Ayele K."/>
            <person name="Benjamin B."/>
            <person name="Blakesley R.W."/>
            <person name="Boakye A."/>
            <person name="Bouffard G.G."/>
            <person name="Brinkley C."/>
            <person name="Brooks S."/>
            <person name="Chu G."/>
            <person name="Coleman H."/>
            <person name="Engle J."/>
            <person name="Gestole M."/>
            <person name="Greene A."/>
            <person name="Guan X."/>
            <person name="Gupta J."/>
            <person name="Haghighi P."/>
            <person name="Han J."/>
            <person name="Hansen N."/>
            <person name="Ho S.-L."/>
            <person name="Hu P."/>
            <person name="Hunter G."/>
            <person name="Hurle B."/>
            <person name="Idol J.R."/>
            <person name="Kwong P."/>
            <person name="Laric P."/>
            <person name="Larson S."/>
            <person name="Lee-Lin S.-Q."/>
            <person name="Legaspi R."/>
            <person name="Madden M."/>
            <person name="Maduro Q.L."/>
            <person name="Maduro V.B."/>
            <person name="Margulies E.H."/>
            <person name="Masiello C."/>
            <person name="Maskeri B."/>
            <person name="McDowell J."/>
            <person name="Mojidi H.A."/>
            <person name="Mullikin J.C."/>
            <person name="Oestreicher J.S."/>
            <person name="Park M."/>
            <person name="Portnoy M.E."/>
            <person name="Prasad A."/>
            <person name="Puri O."/>
            <person name="Reddix-Dugue N."/>
            <person name="Schandler K."/>
            <person name="Schueler M.G."/>
            <person name="Sison C."/>
            <person name="Stantripop S."/>
            <person name="Stephen E."/>
            <person name="Taye A."/>
            <person name="Thomas J.W."/>
            <person name="Thomas P.J."/>
            <person name="Tsipouri V."/>
            <person name="Ung L."/>
            <person name="Vogt J.L."/>
            <person name="Wetherby K.D."/>
            <person name="Young A."/>
            <person name="Green E.D."/>
        </authorList>
    </citation>
    <scope>NUCLEOTIDE SEQUENCE [LARGE SCALE GENOMIC DNA]</scope>
</reference>
<sequence>MSGGKYVDSEGHLYTVPIREQGNIYKPNNKAMADEMNEKQVYDAHTKEIDLVNRDPKHLNDDVVKIDFEDVIAEPEGTHSFDGIWKASFTTFTVTKYWFYRLLSALFGIPMALIWGIYFAILSFLHIWAVVPCIKSFLIEIQCISRVYSIYVHTFCDPLFEAIGKIFSNVRINLQKEI</sequence>
<proteinExistence type="inferred from homology"/>
<accession>Q2QLB0</accession>
<protein>
    <recommendedName>
        <fullName>Caveolin-1</fullName>
    </recommendedName>
</protein>
<gene>
    <name type="primary">CAV1</name>
</gene>
<keyword id="KW-0007">Acetylation</keyword>
<keyword id="KW-1003">Cell membrane</keyword>
<keyword id="KW-0333">Golgi apparatus</keyword>
<keyword id="KW-1017">Isopeptide bond</keyword>
<keyword id="KW-0449">Lipoprotein</keyword>
<keyword id="KW-0472">Membrane</keyword>
<keyword id="KW-0564">Palmitate</keyword>
<keyword id="KW-0597">Phosphoprotein</keyword>
<keyword id="KW-1185">Reference proteome</keyword>
<keyword id="KW-0832">Ubl conjugation</keyword>